<accession>Q0T6G6</accession>
<gene>
    <name evidence="1" type="primary">ybhG</name>
    <name type="ordered locus">SFV_0778</name>
</gene>
<feature type="signal peptide" evidence="1">
    <location>
        <begin position="1"/>
        <end position="15"/>
    </location>
</feature>
<feature type="chain" id="PRO_1000051815" description="UPF0194 membrane protein YbhG">
    <location>
        <begin position="16"/>
        <end position="331"/>
    </location>
</feature>
<feature type="coiled-coil region" evidence="1">
    <location>
        <begin position="107"/>
        <end position="208"/>
    </location>
</feature>
<keyword id="KW-0175">Coiled coil</keyword>
<keyword id="KW-0574">Periplasm</keyword>
<keyword id="KW-0732">Signal</keyword>
<protein>
    <recommendedName>
        <fullName evidence="1">UPF0194 membrane protein YbhG</fullName>
    </recommendedName>
</protein>
<name>YBHG_SHIF8</name>
<proteinExistence type="inferred from homology"/>
<evidence type="ECO:0000255" key="1">
    <source>
        <dbReference type="HAMAP-Rule" id="MF_01304"/>
    </source>
</evidence>
<sequence>MKKPVVIGLAVVVLAAVVAGGYWWYQSRQDNGLTLYGNVDIRTVNLSFRVGGRVESLAVDEGDAIKAGQVLGELDHKPYEIALMQAKAGVSVAQAQYDLMLAGYRDEEIAQAAAAVKQAQAAYDYAQNFYNRQQGLWKSRTISANDLENARSSRDQAQATLKSAQDKLRQYRSGNREQDIAQAKASLEQAQAQLAQAELNLQDSTLIAPSDGTLLTRAVEPGTVLNEGGTVFTVSLTRPVWVRAYVDERNLDQAQPGRKVLLYTDGRPDKPYHGQIGFVSPTAEFTPKTVETPDLRTDLVYRLRIVVTDADDALRQGMPVTVQFGDEAGHE</sequence>
<dbReference type="EMBL" id="CP000266">
    <property type="protein sequence ID" value="ABF03010.1"/>
    <property type="molecule type" value="Genomic_DNA"/>
</dbReference>
<dbReference type="SMR" id="Q0T6G6"/>
<dbReference type="KEGG" id="sfv:SFV_0778"/>
<dbReference type="HOGENOM" id="CLU_018816_6_3_6"/>
<dbReference type="Proteomes" id="UP000000659">
    <property type="component" value="Chromosome"/>
</dbReference>
<dbReference type="GO" id="GO:0042597">
    <property type="term" value="C:periplasmic space"/>
    <property type="evidence" value="ECO:0007669"/>
    <property type="project" value="UniProtKB-SubCell"/>
</dbReference>
<dbReference type="FunFam" id="1.10.287.470:FF:000004">
    <property type="entry name" value="UPF0194 membrane protein YbhG"/>
    <property type="match status" value="1"/>
</dbReference>
<dbReference type="FunFam" id="2.40.30.170:FF:000005">
    <property type="entry name" value="UPF0194 membrane protein YbhG"/>
    <property type="match status" value="1"/>
</dbReference>
<dbReference type="FunFam" id="2.40.50.100:FF:000025">
    <property type="entry name" value="UPF0194 membrane protein YbhG"/>
    <property type="match status" value="1"/>
</dbReference>
<dbReference type="Gene3D" id="2.40.30.170">
    <property type="match status" value="1"/>
</dbReference>
<dbReference type="Gene3D" id="2.40.50.100">
    <property type="match status" value="2"/>
</dbReference>
<dbReference type="Gene3D" id="1.10.287.470">
    <property type="entry name" value="Helix hairpin bin"/>
    <property type="match status" value="2"/>
</dbReference>
<dbReference type="HAMAP" id="MF_01304">
    <property type="entry name" value="UPF0194"/>
    <property type="match status" value="1"/>
</dbReference>
<dbReference type="InterPro" id="IPR032317">
    <property type="entry name" value="CusB_D23"/>
</dbReference>
<dbReference type="InterPro" id="IPR022936">
    <property type="entry name" value="UPF0194_membrane_YbhG"/>
</dbReference>
<dbReference type="InterPro" id="IPR050465">
    <property type="entry name" value="UPF0194_transport"/>
</dbReference>
<dbReference type="NCBIfam" id="NF002939">
    <property type="entry name" value="PRK03598.1"/>
    <property type="match status" value="1"/>
</dbReference>
<dbReference type="PANTHER" id="PTHR32347">
    <property type="entry name" value="EFFLUX SYSTEM COMPONENT YKNX-RELATED"/>
    <property type="match status" value="1"/>
</dbReference>
<dbReference type="PANTHER" id="PTHR32347:SF29">
    <property type="entry name" value="UPF0194 MEMBRANE PROTEIN YBHG"/>
    <property type="match status" value="1"/>
</dbReference>
<dbReference type="Pfam" id="PF16576">
    <property type="entry name" value="HlyD_D23"/>
    <property type="match status" value="1"/>
</dbReference>
<dbReference type="SUPFAM" id="SSF111369">
    <property type="entry name" value="HlyD-like secretion proteins"/>
    <property type="match status" value="3"/>
</dbReference>
<reference key="1">
    <citation type="journal article" date="2006" name="BMC Genomics">
        <title>Complete genome sequence of Shigella flexneri 5b and comparison with Shigella flexneri 2a.</title>
        <authorList>
            <person name="Nie H."/>
            <person name="Yang F."/>
            <person name="Zhang X."/>
            <person name="Yang J."/>
            <person name="Chen L."/>
            <person name="Wang J."/>
            <person name="Xiong Z."/>
            <person name="Peng J."/>
            <person name="Sun L."/>
            <person name="Dong J."/>
            <person name="Xue Y."/>
            <person name="Xu X."/>
            <person name="Chen S."/>
            <person name="Yao Z."/>
            <person name="Shen Y."/>
            <person name="Jin Q."/>
        </authorList>
    </citation>
    <scope>NUCLEOTIDE SEQUENCE [LARGE SCALE GENOMIC DNA]</scope>
    <source>
        <strain>8401</strain>
    </source>
</reference>
<comment type="subcellular location">
    <subcellularLocation>
        <location evidence="1">Periplasm</location>
    </subcellularLocation>
</comment>
<comment type="similarity">
    <text evidence="1">Belongs to the UPF0194 family.</text>
</comment>
<organism>
    <name type="scientific">Shigella flexneri serotype 5b (strain 8401)</name>
    <dbReference type="NCBI Taxonomy" id="373384"/>
    <lineage>
        <taxon>Bacteria</taxon>
        <taxon>Pseudomonadati</taxon>
        <taxon>Pseudomonadota</taxon>
        <taxon>Gammaproteobacteria</taxon>
        <taxon>Enterobacterales</taxon>
        <taxon>Enterobacteriaceae</taxon>
        <taxon>Shigella</taxon>
    </lineage>
</organism>